<sequence>MWVIAMFDLPTDTPKARKAYARFRKDLLEDGFTMMQYSVYSRHCASIENAEVHVKRMGAVVPAQGEVRFLTITDNQFGRIKVYVGKKRQPTTQSPSQLQLF</sequence>
<protein>
    <recommendedName>
        <fullName evidence="1">CRISPR-associated endoribonuclease Cas2</fullName>
        <ecNumber evidence="1">3.1.-.-</ecNumber>
    </recommendedName>
</protein>
<keyword id="KW-0051">Antiviral defense</keyword>
<keyword id="KW-0255">Endonuclease</keyword>
<keyword id="KW-0378">Hydrolase</keyword>
<keyword id="KW-0460">Magnesium</keyword>
<keyword id="KW-0479">Metal-binding</keyword>
<keyword id="KW-0540">Nuclease</keyword>
<keyword id="KW-1185">Reference proteome</keyword>
<reference key="1">
    <citation type="journal article" date="2011" name="Stand. Genomic Sci.">
        <title>Complete genome sequence of Parvibaculum lavamentivorans type strain (DS-1(T)).</title>
        <authorList>
            <person name="Schleheck D."/>
            <person name="Weiss M."/>
            <person name="Pitluck S."/>
            <person name="Bruce D."/>
            <person name="Land M.L."/>
            <person name="Han S."/>
            <person name="Saunders E."/>
            <person name="Tapia R."/>
            <person name="Detter C."/>
            <person name="Brettin T."/>
            <person name="Han J."/>
            <person name="Woyke T."/>
            <person name="Goodwin L."/>
            <person name="Pennacchio L."/>
            <person name="Nolan M."/>
            <person name="Cook A.M."/>
            <person name="Kjelleberg S."/>
            <person name="Thomas T."/>
        </authorList>
    </citation>
    <scope>NUCLEOTIDE SEQUENCE [LARGE SCALE GENOMIC DNA]</scope>
    <source>
        <strain>DS-1 / DSM 13023 / NCIMB 13966</strain>
    </source>
</reference>
<accession>A7HP87</accession>
<dbReference type="EC" id="3.1.-.-" evidence="1"/>
<dbReference type="EMBL" id="CP000774">
    <property type="protein sequence ID" value="ABS61720.1"/>
    <property type="molecule type" value="Genomic_DNA"/>
</dbReference>
<dbReference type="SMR" id="A7HP87"/>
<dbReference type="STRING" id="402881.Plav_0097"/>
<dbReference type="KEGG" id="pla:Plav_0097"/>
<dbReference type="eggNOG" id="COG3512">
    <property type="taxonomic scope" value="Bacteria"/>
</dbReference>
<dbReference type="HOGENOM" id="CLU_150500_0_0_5"/>
<dbReference type="OrthoDB" id="9791737at2"/>
<dbReference type="Proteomes" id="UP000006377">
    <property type="component" value="Chromosome"/>
</dbReference>
<dbReference type="GO" id="GO:0046872">
    <property type="term" value="F:metal ion binding"/>
    <property type="evidence" value="ECO:0007669"/>
    <property type="project" value="UniProtKB-UniRule"/>
</dbReference>
<dbReference type="GO" id="GO:0004521">
    <property type="term" value="F:RNA endonuclease activity"/>
    <property type="evidence" value="ECO:0007669"/>
    <property type="project" value="InterPro"/>
</dbReference>
<dbReference type="GO" id="GO:0051607">
    <property type="term" value="P:defense response to virus"/>
    <property type="evidence" value="ECO:0007669"/>
    <property type="project" value="UniProtKB-UniRule"/>
</dbReference>
<dbReference type="GO" id="GO:0043571">
    <property type="term" value="P:maintenance of CRISPR repeat elements"/>
    <property type="evidence" value="ECO:0007669"/>
    <property type="project" value="UniProtKB-UniRule"/>
</dbReference>
<dbReference type="Gene3D" id="3.30.70.240">
    <property type="match status" value="1"/>
</dbReference>
<dbReference type="HAMAP" id="MF_01471">
    <property type="entry name" value="Cas2"/>
    <property type="match status" value="1"/>
</dbReference>
<dbReference type="InterPro" id="IPR021127">
    <property type="entry name" value="CRISPR_associated_Cas2"/>
</dbReference>
<dbReference type="InterPro" id="IPR019199">
    <property type="entry name" value="Virulence_VapD/CRISPR_Cas2"/>
</dbReference>
<dbReference type="NCBIfam" id="TIGR01573">
    <property type="entry name" value="cas2"/>
    <property type="match status" value="1"/>
</dbReference>
<dbReference type="Pfam" id="PF09827">
    <property type="entry name" value="CRISPR_Cas2"/>
    <property type="match status" value="1"/>
</dbReference>
<dbReference type="SUPFAM" id="SSF143430">
    <property type="entry name" value="TTP0101/SSO1404-like"/>
    <property type="match status" value="1"/>
</dbReference>
<proteinExistence type="inferred from homology"/>
<name>CAS2_PARL1</name>
<evidence type="ECO:0000255" key="1">
    <source>
        <dbReference type="HAMAP-Rule" id="MF_01471"/>
    </source>
</evidence>
<comment type="function">
    <text evidence="1">CRISPR (clustered regularly interspaced short palindromic repeat), is an adaptive immune system that provides protection against mobile genetic elements (viruses, transposable elements and conjugative plasmids). CRISPR clusters contain sequences complementary to antecedent mobile elements and target invading nucleic acids. CRISPR clusters are transcribed and processed into CRISPR RNA (crRNA). Functions as a ssRNA-specific endoribonuclease. Involved in the integration of spacer DNA into the CRISPR cassette.</text>
</comment>
<comment type="cofactor">
    <cofactor evidence="1">
        <name>Mg(2+)</name>
        <dbReference type="ChEBI" id="CHEBI:18420"/>
    </cofactor>
</comment>
<comment type="subunit">
    <text evidence="1">Homodimer, forms a heterotetramer with a Cas1 homodimer.</text>
</comment>
<comment type="similarity">
    <text evidence="1">Belongs to the CRISPR-associated endoribonuclease Cas2 protein family.</text>
</comment>
<organism>
    <name type="scientific">Parvibaculum lavamentivorans (strain DS-1 / DSM 13023 / NCIMB 13966)</name>
    <dbReference type="NCBI Taxonomy" id="402881"/>
    <lineage>
        <taxon>Bacteria</taxon>
        <taxon>Pseudomonadati</taxon>
        <taxon>Pseudomonadota</taxon>
        <taxon>Alphaproteobacteria</taxon>
        <taxon>Hyphomicrobiales</taxon>
        <taxon>Parvibaculaceae</taxon>
        <taxon>Parvibaculum</taxon>
    </lineage>
</organism>
<feature type="chain" id="PRO_0000417723" description="CRISPR-associated endoribonuclease Cas2">
    <location>
        <begin position="1"/>
        <end position="101"/>
    </location>
</feature>
<feature type="binding site" evidence="1">
    <location>
        <position position="8"/>
    </location>
    <ligand>
        <name>Mg(2+)</name>
        <dbReference type="ChEBI" id="CHEBI:18420"/>
        <note>catalytic</note>
    </ligand>
</feature>
<gene>
    <name evidence="1" type="primary">cas2</name>
    <name type="ordered locus">Plav_0097</name>
</gene>